<sequence length="409" mass="45310">MPKVTVLDVRLYGEPVSTLTNLQDGRTIFAFNEAYIEDEKRPTLSLSLKDPFGALITKFRPYNMVVPPFFSNLLPEGPLRKYLADRAGVKPSREFLLLWMLGRDLPGAVTVHPSEGDDAPPDDEQAIVEARPNALRFSLAGVQLKFSAFKNDKKGGGLTIPAEGTGGSWIVKLPSQQYSGVPENEFAMMTIARMMGMDVPELQLVDLDAVSGLPQGVGELHGQALAIKRFDRTPEGAVHIEDFAQVFGVFPDHKYDKGNYRMIGRVLGIETSTADVAEFIRRLVFSTLIGNGDMHLKNWSLIYPDRRTPALSPAYDLLSTIPYIEGEDTAALNFSRTKKMAALSKDELAHLAAKAELSEKLVIDTARETVERFRAVWEAEKKNLPMAAKVADTIDTHAPTVELYREFAK</sequence>
<protein>
    <recommendedName>
        <fullName>Putative kinase Y4dM</fullName>
        <ecNumber>2.-.-.-</ecNumber>
    </recommendedName>
</protein>
<keyword id="KW-0418">Kinase</keyword>
<keyword id="KW-0614">Plasmid</keyword>
<keyword id="KW-1185">Reference proteome</keyword>
<keyword id="KW-0808">Transferase</keyword>
<evidence type="ECO:0000255" key="1"/>
<evidence type="ECO:0000305" key="2"/>
<proteinExistence type="inferred from homology"/>
<organism>
    <name type="scientific">Sinorhizobium fredii (strain NBRC 101917 / NGR234)</name>
    <dbReference type="NCBI Taxonomy" id="394"/>
    <lineage>
        <taxon>Bacteria</taxon>
        <taxon>Pseudomonadati</taxon>
        <taxon>Pseudomonadota</taxon>
        <taxon>Alphaproteobacteria</taxon>
        <taxon>Hyphomicrobiales</taxon>
        <taxon>Rhizobiaceae</taxon>
        <taxon>Sinorhizobium/Ensifer group</taxon>
        <taxon>Sinorhizobium</taxon>
    </lineage>
</organism>
<geneLocation type="plasmid">
    <name>sym pNGR234a</name>
</geneLocation>
<reference key="1">
    <citation type="journal article" date="1997" name="Nature">
        <title>Molecular basis of symbiosis between Rhizobium and legumes.</title>
        <authorList>
            <person name="Freiberg C.A."/>
            <person name="Fellay R."/>
            <person name="Bairoch A."/>
            <person name="Broughton W.J."/>
            <person name="Rosenthal A."/>
            <person name="Perret X."/>
        </authorList>
    </citation>
    <scope>NUCLEOTIDE SEQUENCE [LARGE SCALE GENOMIC DNA]</scope>
    <source>
        <strain>NBRC 101917 / NGR234</strain>
    </source>
</reference>
<reference key="2">
    <citation type="journal article" date="2009" name="Appl. Environ. Microbiol.">
        <title>Rhizobium sp. strain NGR234 possesses a remarkable number of secretion systems.</title>
        <authorList>
            <person name="Schmeisser C."/>
            <person name="Liesegang H."/>
            <person name="Krysciak D."/>
            <person name="Bakkou N."/>
            <person name="Le Quere A."/>
            <person name="Wollherr A."/>
            <person name="Heinemeyer I."/>
            <person name="Morgenstern B."/>
            <person name="Pommerening-Roeser A."/>
            <person name="Flores M."/>
            <person name="Palacios R."/>
            <person name="Brenner S."/>
            <person name="Gottschalk G."/>
            <person name="Schmitz R.A."/>
            <person name="Broughton W.J."/>
            <person name="Perret X."/>
            <person name="Strittmatter A.W."/>
            <person name="Streit W.R."/>
        </authorList>
    </citation>
    <scope>NUCLEOTIDE SEQUENCE [LARGE SCALE GENOMIC DNA]</scope>
    <source>
        <strain>NBRC 101917 / NGR234</strain>
    </source>
</reference>
<gene>
    <name type="ordered locus">NGR_a04040</name>
    <name type="ORF">y4dM</name>
</gene>
<accession>P55412</accession>
<dbReference type="EC" id="2.-.-.-"/>
<dbReference type="EMBL" id="U00090">
    <property type="protein sequence ID" value="AAB91642.1"/>
    <property type="molecule type" value="Genomic_DNA"/>
</dbReference>
<dbReference type="RefSeq" id="NP_443822.1">
    <property type="nucleotide sequence ID" value="NC_000914.2"/>
</dbReference>
<dbReference type="RefSeq" id="WP_010875415.1">
    <property type="nucleotide sequence ID" value="NC_000914.2"/>
</dbReference>
<dbReference type="SMR" id="P55412"/>
<dbReference type="KEGG" id="rhi:NGR_a04040"/>
<dbReference type="PATRIC" id="fig|394.7.peg.426"/>
<dbReference type="eggNOG" id="COG3550">
    <property type="taxonomic scope" value="Bacteria"/>
</dbReference>
<dbReference type="HOGENOM" id="CLU_030167_3_0_5"/>
<dbReference type="OrthoDB" id="9805913at2"/>
<dbReference type="Proteomes" id="UP000001054">
    <property type="component" value="Plasmid pNGR234a"/>
</dbReference>
<dbReference type="GO" id="GO:0005829">
    <property type="term" value="C:cytosol"/>
    <property type="evidence" value="ECO:0007669"/>
    <property type="project" value="TreeGrafter"/>
</dbReference>
<dbReference type="GO" id="GO:0004674">
    <property type="term" value="F:protein serine/threonine kinase activity"/>
    <property type="evidence" value="ECO:0007669"/>
    <property type="project" value="TreeGrafter"/>
</dbReference>
<dbReference type="Gene3D" id="1.10.1070.20">
    <property type="match status" value="1"/>
</dbReference>
<dbReference type="InterPro" id="IPR012893">
    <property type="entry name" value="HipA-like_C"/>
</dbReference>
<dbReference type="InterPro" id="IPR017508">
    <property type="entry name" value="HipA_N1"/>
</dbReference>
<dbReference type="InterPro" id="IPR052028">
    <property type="entry name" value="HipA_Ser/Thr_kinase"/>
</dbReference>
<dbReference type="NCBIfam" id="TIGR03071">
    <property type="entry name" value="couple_hipA"/>
    <property type="match status" value="1"/>
</dbReference>
<dbReference type="PANTHER" id="PTHR37419">
    <property type="entry name" value="SERINE/THREONINE-PROTEIN KINASE TOXIN HIPA"/>
    <property type="match status" value="1"/>
</dbReference>
<dbReference type="PANTHER" id="PTHR37419:SF1">
    <property type="entry name" value="SERINE_THREONINE-PROTEIN KINASE TOXIN HIPA"/>
    <property type="match status" value="1"/>
</dbReference>
<dbReference type="Pfam" id="PF13657">
    <property type="entry name" value="Couple_hipA"/>
    <property type="match status" value="1"/>
</dbReference>
<dbReference type="Pfam" id="PF07804">
    <property type="entry name" value="HipA_C"/>
    <property type="match status" value="1"/>
</dbReference>
<comment type="similarity">
    <text evidence="2">Belongs to the HipA Ser/Thr kinase family.</text>
</comment>
<name>Y4DM_SINFN</name>
<feature type="chain" id="PRO_0000200821" description="Putative kinase Y4dM">
    <location>
        <begin position="1"/>
        <end position="409"/>
    </location>
</feature>
<feature type="active site" description="Proton acceptor" evidence="1">
    <location>
        <position position="293"/>
    </location>
</feature>